<comment type="function">
    <text evidence="1">RuBisCO catalyzes two reactions: the carboxylation of D-ribulose 1,5-bisphosphate, the primary event in carbon dioxide fixation, as well as the oxidative fragmentation of the pentose substrate in the photorespiration process. Both reactions occur simultaneously and in competition at the same active site.</text>
</comment>
<comment type="catalytic activity">
    <reaction evidence="1">
        <text>2 (2R)-3-phosphoglycerate + 2 H(+) = D-ribulose 1,5-bisphosphate + CO2 + H2O</text>
        <dbReference type="Rhea" id="RHEA:23124"/>
        <dbReference type="ChEBI" id="CHEBI:15377"/>
        <dbReference type="ChEBI" id="CHEBI:15378"/>
        <dbReference type="ChEBI" id="CHEBI:16526"/>
        <dbReference type="ChEBI" id="CHEBI:57870"/>
        <dbReference type="ChEBI" id="CHEBI:58272"/>
        <dbReference type="EC" id="4.1.1.39"/>
    </reaction>
</comment>
<comment type="catalytic activity">
    <reaction evidence="1">
        <text>D-ribulose 1,5-bisphosphate + O2 = 2-phosphoglycolate + (2R)-3-phosphoglycerate + 2 H(+)</text>
        <dbReference type="Rhea" id="RHEA:36631"/>
        <dbReference type="ChEBI" id="CHEBI:15378"/>
        <dbReference type="ChEBI" id="CHEBI:15379"/>
        <dbReference type="ChEBI" id="CHEBI:57870"/>
        <dbReference type="ChEBI" id="CHEBI:58033"/>
        <dbReference type="ChEBI" id="CHEBI:58272"/>
    </reaction>
</comment>
<comment type="cofactor">
    <cofactor evidence="1">
        <name>Mg(2+)</name>
        <dbReference type="ChEBI" id="CHEBI:18420"/>
    </cofactor>
    <text evidence="1">Binds 1 Mg(2+) ion per subunit.</text>
</comment>
<comment type="subunit">
    <text evidence="1">Heterohexadecamer of 8 large chains and 8 small chains; disulfide-linked. The disulfide link is formed within the large subunit homodimers.</text>
</comment>
<comment type="subcellular location">
    <subcellularLocation>
        <location>Plastid</location>
        <location>Chloroplast</location>
    </subcellularLocation>
</comment>
<comment type="PTM">
    <text evidence="1">The disulfide bond which can form in the large chain dimeric partners within the hexadecamer appears to be associated with oxidative stress and protein turnover.</text>
</comment>
<comment type="miscellaneous">
    <text evidence="1">The basic functional RuBisCO is composed of a large chain homodimer in a 'head-to-tail' conformation. In form I RuBisCO this homodimer is arranged in a barrel-like tetramer with the small subunits forming a tetrameric 'cap' on each end of the 'barrel'.</text>
</comment>
<comment type="similarity">
    <text evidence="1">Belongs to the RuBisCO large chain family. Type I subfamily.</text>
</comment>
<dbReference type="EC" id="4.1.1.39" evidence="1"/>
<dbReference type="EMBL" id="L01960">
    <property type="protein sequence ID" value="AAA84717.2"/>
    <property type="molecule type" value="Genomic_DNA"/>
</dbReference>
<dbReference type="SMR" id="P28460"/>
<dbReference type="GO" id="GO:0009507">
    <property type="term" value="C:chloroplast"/>
    <property type="evidence" value="ECO:0007669"/>
    <property type="project" value="UniProtKB-SubCell"/>
</dbReference>
<dbReference type="GO" id="GO:0000287">
    <property type="term" value="F:magnesium ion binding"/>
    <property type="evidence" value="ECO:0007669"/>
    <property type="project" value="InterPro"/>
</dbReference>
<dbReference type="GO" id="GO:0004497">
    <property type="term" value="F:monooxygenase activity"/>
    <property type="evidence" value="ECO:0007669"/>
    <property type="project" value="UniProtKB-KW"/>
</dbReference>
<dbReference type="GO" id="GO:0016984">
    <property type="term" value="F:ribulose-bisphosphate carboxylase activity"/>
    <property type="evidence" value="ECO:0007669"/>
    <property type="project" value="UniProtKB-EC"/>
</dbReference>
<dbReference type="GO" id="GO:0009853">
    <property type="term" value="P:photorespiration"/>
    <property type="evidence" value="ECO:0007669"/>
    <property type="project" value="UniProtKB-KW"/>
</dbReference>
<dbReference type="GO" id="GO:0019253">
    <property type="term" value="P:reductive pentose-phosphate cycle"/>
    <property type="evidence" value="ECO:0007669"/>
    <property type="project" value="UniProtKB-KW"/>
</dbReference>
<dbReference type="CDD" id="cd08212">
    <property type="entry name" value="RuBisCO_large_I"/>
    <property type="match status" value="1"/>
</dbReference>
<dbReference type="FunFam" id="3.20.20.110:FF:000001">
    <property type="entry name" value="Ribulose bisphosphate carboxylase large chain"/>
    <property type="match status" value="1"/>
</dbReference>
<dbReference type="FunFam" id="3.30.70.150:FF:000001">
    <property type="entry name" value="Ribulose bisphosphate carboxylase large chain"/>
    <property type="match status" value="1"/>
</dbReference>
<dbReference type="Gene3D" id="3.20.20.110">
    <property type="entry name" value="Ribulose bisphosphate carboxylase, large subunit, C-terminal domain"/>
    <property type="match status" value="1"/>
</dbReference>
<dbReference type="Gene3D" id="3.30.70.150">
    <property type="entry name" value="RuBisCO large subunit, N-terminal domain"/>
    <property type="match status" value="1"/>
</dbReference>
<dbReference type="HAMAP" id="MF_01338">
    <property type="entry name" value="RuBisCO_L_type1"/>
    <property type="match status" value="1"/>
</dbReference>
<dbReference type="InterPro" id="IPR033966">
    <property type="entry name" value="RuBisCO"/>
</dbReference>
<dbReference type="InterPro" id="IPR020878">
    <property type="entry name" value="RuBisCo_large_chain_AS"/>
</dbReference>
<dbReference type="InterPro" id="IPR000685">
    <property type="entry name" value="RuBisCO_lsu_C"/>
</dbReference>
<dbReference type="InterPro" id="IPR036376">
    <property type="entry name" value="RuBisCO_lsu_C_sf"/>
</dbReference>
<dbReference type="InterPro" id="IPR017443">
    <property type="entry name" value="RuBisCO_lsu_fd_N"/>
</dbReference>
<dbReference type="InterPro" id="IPR036422">
    <property type="entry name" value="RuBisCO_lsu_N_sf"/>
</dbReference>
<dbReference type="InterPro" id="IPR020888">
    <property type="entry name" value="RuBisCO_lsuI"/>
</dbReference>
<dbReference type="NCBIfam" id="NF003252">
    <property type="entry name" value="PRK04208.1"/>
    <property type="match status" value="1"/>
</dbReference>
<dbReference type="PANTHER" id="PTHR42704">
    <property type="entry name" value="RIBULOSE BISPHOSPHATE CARBOXYLASE"/>
    <property type="match status" value="1"/>
</dbReference>
<dbReference type="PANTHER" id="PTHR42704:SF15">
    <property type="entry name" value="RIBULOSE BISPHOSPHATE CARBOXYLASE LARGE CHAIN"/>
    <property type="match status" value="1"/>
</dbReference>
<dbReference type="Pfam" id="PF00016">
    <property type="entry name" value="RuBisCO_large"/>
    <property type="match status" value="1"/>
</dbReference>
<dbReference type="Pfam" id="PF02788">
    <property type="entry name" value="RuBisCO_large_N"/>
    <property type="match status" value="1"/>
</dbReference>
<dbReference type="SFLD" id="SFLDG01052">
    <property type="entry name" value="RuBisCO"/>
    <property type="match status" value="1"/>
</dbReference>
<dbReference type="SFLD" id="SFLDS00014">
    <property type="entry name" value="RuBisCO"/>
    <property type="match status" value="1"/>
</dbReference>
<dbReference type="SFLD" id="SFLDG00301">
    <property type="entry name" value="RuBisCO-like_proteins"/>
    <property type="match status" value="1"/>
</dbReference>
<dbReference type="SUPFAM" id="SSF51649">
    <property type="entry name" value="RuBisCo, C-terminal domain"/>
    <property type="match status" value="1"/>
</dbReference>
<dbReference type="SUPFAM" id="SSF54966">
    <property type="entry name" value="RuBisCO, large subunit, small (N-terminal) domain"/>
    <property type="match status" value="1"/>
</dbReference>
<dbReference type="PROSITE" id="PS00157">
    <property type="entry name" value="RUBISCO_LARGE"/>
    <property type="match status" value="1"/>
</dbReference>
<feature type="chain" id="PRO_0000062614" description="Ribulose bisphosphate carboxylase large chain">
    <location>
        <begin position="1" status="less than"/>
        <end position="466"/>
    </location>
</feature>
<feature type="active site" description="Proton acceptor" evidence="1">
    <location>
        <position position="166"/>
    </location>
</feature>
<feature type="active site" description="Proton acceptor" evidence="1">
    <location>
        <position position="285"/>
    </location>
</feature>
<feature type="binding site" description="in homodimeric partner" evidence="1">
    <location>
        <position position="114"/>
    </location>
    <ligand>
        <name>substrate</name>
    </ligand>
</feature>
<feature type="binding site" evidence="1">
    <location>
        <position position="164"/>
    </location>
    <ligand>
        <name>substrate</name>
    </ligand>
</feature>
<feature type="binding site" evidence="1">
    <location>
        <position position="168"/>
    </location>
    <ligand>
        <name>substrate</name>
    </ligand>
</feature>
<feature type="binding site" description="via carbamate group" evidence="1">
    <location>
        <position position="192"/>
    </location>
    <ligand>
        <name>Mg(2+)</name>
        <dbReference type="ChEBI" id="CHEBI:18420"/>
    </ligand>
</feature>
<feature type="binding site" evidence="1">
    <location>
        <position position="194"/>
    </location>
    <ligand>
        <name>Mg(2+)</name>
        <dbReference type="ChEBI" id="CHEBI:18420"/>
    </ligand>
</feature>
<feature type="binding site" evidence="1">
    <location>
        <position position="195"/>
    </location>
    <ligand>
        <name>Mg(2+)</name>
        <dbReference type="ChEBI" id="CHEBI:18420"/>
    </ligand>
</feature>
<feature type="binding site" evidence="1">
    <location>
        <position position="286"/>
    </location>
    <ligand>
        <name>substrate</name>
    </ligand>
</feature>
<feature type="binding site" evidence="1">
    <location>
        <position position="318"/>
    </location>
    <ligand>
        <name>substrate</name>
    </ligand>
</feature>
<feature type="binding site" evidence="1">
    <location>
        <position position="370"/>
    </location>
    <ligand>
        <name>substrate</name>
    </ligand>
</feature>
<feature type="site" description="Transition state stabilizer" evidence="1">
    <location>
        <position position="325"/>
    </location>
</feature>
<feature type="modified residue" description="N6,N6,N6-trimethyllysine" evidence="1">
    <location>
        <position position="5"/>
    </location>
</feature>
<feature type="modified residue" description="N6-carboxylysine" evidence="1">
    <location>
        <position position="192"/>
    </location>
</feature>
<feature type="disulfide bond" description="Interchain; in linked form" evidence="1">
    <location>
        <position position="238"/>
    </location>
</feature>
<feature type="non-terminal residue">
    <location>
        <position position="1"/>
    </location>
</feature>
<organism>
    <name type="scientific">Vitis aestivalis</name>
    <name type="common">Grape</name>
    <dbReference type="NCBI Taxonomy" id="3605"/>
    <lineage>
        <taxon>Eukaryota</taxon>
        <taxon>Viridiplantae</taxon>
        <taxon>Streptophyta</taxon>
        <taxon>Embryophyta</taxon>
        <taxon>Tracheophyta</taxon>
        <taxon>Spermatophyta</taxon>
        <taxon>Magnoliopsida</taxon>
        <taxon>eudicotyledons</taxon>
        <taxon>Gunneridae</taxon>
        <taxon>Pentapetalae</taxon>
        <taxon>rosids</taxon>
        <taxon>Vitales</taxon>
        <taxon>Vitaceae</taxon>
        <taxon>Viteae</taxon>
        <taxon>Vitis</taxon>
    </lineage>
</organism>
<proteinExistence type="inferred from homology"/>
<gene>
    <name evidence="1" type="primary">rbcL</name>
</gene>
<keyword id="KW-0113">Calvin cycle</keyword>
<keyword id="KW-0120">Carbon dioxide fixation</keyword>
<keyword id="KW-0150">Chloroplast</keyword>
<keyword id="KW-1015">Disulfide bond</keyword>
<keyword id="KW-0456">Lyase</keyword>
<keyword id="KW-0460">Magnesium</keyword>
<keyword id="KW-0479">Metal-binding</keyword>
<keyword id="KW-0488">Methylation</keyword>
<keyword id="KW-0503">Monooxygenase</keyword>
<keyword id="KW-0560">Oxidoreductase</keyword>
<keyword id="KW-0601">Photorespiration</keyword>
<keyword id="KW-0602">Photosynthesis</keyword>
<keyword id="KW-0934">Plastid</keyword>
<sequence>SVGFKAGVKDYKLTYYTPEYETKPTDILAAFRVTPQPGVPPEEAGAAVAAESSTGTWTTVWTDGLTSLDRYKGRCYHIEPVAGEESQFIAYVAYPLDLFEEGSVTNMFTSIVGNVFGFKALRALRLEDLRIPPAYTKTFQGPPHGIQVERDKLNKYGRPLLGCTIKPKLGLSAKNYGRAVYECLRGGLDFTKDDENVNSQPFMRWRDRFLFCAEAIFKSQAETGEIKGHYLNATAGTCEEMMKRAIFARELGVPIVMHDYLTGGFTANTSLAQYCRDNGLLLHIHRAMHAVIDRQKNHGMHFRVLAKALRMSGGDHIHAGTVVGKLEGEREITLGFVDLLRDDFVEKDRSRGIYFTQDWVSLPGVLPVASGGIHVWHMPALTEIFGDDSVLQFGGGTLGHPWGNAPGAVANRVALEACVQARNEGRDLAREGNEIIRAASKWSPELAAACEVWKEIKFEFPAMDTL</sequence>
<reference key="1">
    <citation type="journal article" date="1992" name="Science">
        <title>Carnivorous plants: phylogeny and structural evolution.</title>
        <authorList>
            <person name="Albert V.A."/>
            <person name="Williams S.E."/>
            <person name="Chase M.W."/>
        </authorList>
    </citation>
    <scope>NUCLEOTIDE SEQUENCE [GENOMIC DNA]</scope>
</reference>
<name>RBL_VITAE</name>
<geneLocation type="chloroplast"/>
<protein>
    <recommendedName>
        <fullName evidence="1">Ribulose bisphosphate carboxylase large chain</fullName>
        <shortName evidence="1">RuBisCO large subunit</shortName>
        <ecNumber evidence="1">4.1.1.39</ecNumber>
    </recommendedName>
</protein>
<evidence type="ECO:0000255" key="1">
    <source>
        <dbReference type="HAMAP-Rule" id="MF_01338"/>
    </source>
</evidence>
<accession>P28460</accession>